<gene>
    <name type="primary">PRM1</name>
</gene>
<comment type="function">
    <text>Protamines substitute for histones in the chromatin of sperm during the haploid phase of spermatogenesis. They compact sperm DNA into a highly condensed, stable and inactive complex.</text>
</comment>
<comment type="subcellular location">
    <subcellularLocation>
        <location>Nucleus</location>
    </subcellularLocation>
    <subcellularLocation>
        <location>Chromosome</location>
    </subcellularLocation>
</comment>
<comment type="tissue specificity">
    <text>Testis.</text>
</comment>
<comment type="similarity">
    <text evidence="2">Belongs to the protamine P1 family.</text>
</comment>
<evidence type="ECO:0000256" key="1">
    <source>
        <dbReference type="SAM" id="MobiDB-lite"/>
    </source>
</evidence>
<evidence type="ECO:0000305" key="2"/>
<sequence length="64" mass="8991">MVRYRRHSRSRSRSRYRRRRRRRLRNRRRRYRRSRRGRRRRRRGSRRGYSRRRYQSRRRRRRRY</sequence>
<organism>
    <name type="scientific">Dromiciops gliroides</name>
    <name type="common">Monito del Monte</name>
    <name type="synonym">Dromiciops australis</name>
    <dbReference type="NCBI Taxonomy" id="33562"/>
    <lineage>
        <taxon>Eukaryota</taxon>
        <taxon>Metazoa</taxon>
        <taxon>Chordata</taxon>
        <taxon>Craniata</taxon>
        <taxon>Vertebrata</taxon>
        <taxon>Euteleostomi</taxon>
        <taxon>Mammalia</taxon>
        <taxon>Metatheria</taxon>
        <taxon>Microbiotheria</taxon>
        <taxon>Microbiotheriidae</taxon>
        <taxon>Dromiciops</taxon>
    </lineage>
</organism>
<name>HSP1_DROGL</name>
<keyword id="KW-0158">Chromosome</keyword>
<keyword id="KW-0217">Developmental protein</keyword>
<keyword id="KW-0221">Differentiation</keyword>
<keyword id="KW-0226">DNA condensation</keyword>
<keyword id="KW-0238">DNA-binding</keyword>
<keyword id="KW-0544">Nucleosome core</keyword>
<keyword id="KW-0539">Nucleus</keyword>
<keyword id="KW-0744">Spermatogenesis</keyword>
<feature type="chain" id="PRO_0000191474" description="Sperm protamine P1">
    <location>
        <begin position="1"/>
        <end position="64"/>
    </location>
</feature>
<feature type="region of interest" description="Disordered" evidence="1">
    <location>
        <begin position="1"/>
        <end position="64"/>
    </location>
</feature>
<protein>
    <recommendedName>
        <fullName>Sperm protamine P1</fullName>
    </recommendedName>
</protein>
<accession>P42132</accession>
<reference key="1">
    <citation type="journal article" date="1995" name="Proc. R. Soc. B">
        <title>Molecular phylogeny and evolution of marsupial protamine P1 genes.</title>
        <authorList>
            <person name="Retief J.D."/>
            <person name="Krajewski C."/>
            <person name="Westerman M."/>
            <person name="Winkfein R.J."/>
            <person name="Dixon G.H."/>
        </authorList>
    </citation>
    <scope>NUCLEOTIDE SEQUENCE [GENOMIC DNA]</scope>
    <source>
        <tissue>Sperm</tissue>
    </source>
</reference>
<proteinExistence type="evidence at transcript level"/>
<dbReference type="EMBL" id="L35449">
    <property type="protein sequence ID" value="AAA74611.1"/>
    <property type="molecule type" value="Genomic_DNA"/>
</dbReference>
<dbReference type="GO" id="GO:0000786">
    <property type="term" value="C:nucleosome"/>
    <property type="evidence" value="ECO:0007669"/>
    <property type="project" value="UniProtKB-KW"/>
</dbReference>
<dbReference type="GO" id="GO:0005634">
    <property type="term" value="C:nucleus"/>
    <property type="evidence" value="ECO:0007669"/>
    <property type="project" value="UniProtKB-SubCell"/>
</dbReference>
<dbReference type="GO" id="GO:0003677">
    <property type="term" value="F:DNA binding"/>
    <property type="evidence" value="ECO:0007669"/>
    <property type="project" value="UniProtKB-KW"/>
</dbReference>
<dbReference type="GO" id="GO:0030261">
    <property type="term" value="P:chromosome condensation"/>
    <property type="evidence" value="ECO:0007669"/>
    <property type="project" value="UniProtKB-KW"/>
</dbReference>
<dbReference type="GO" id="GO:0035092">
    <property type="term" value="P:sperm DNA condensation"/>
    <property type="evidence" value="ECO:0007669"/>
    <property type="project" value="InterPro"/>
</dbReference>
<dbReference type="InterPro" id="IPR000221">
    <property type="entry name" value="Protamine_P1"/>
</dbReference>
<dbReference type="PROSITE" id="PS00048">
    <property type="entry name" value="PROTAMINE_P1"/>
    <property type="match status" value="1"/>
</dbReference>